<dbReference type="EMBL" id="CP000505">
    <property type="protein sequence ID" value="ABL77896.1"/>
    <property type="status" value="ALT_INIT"/>
    <property type="molecule type" value="Genomic_DNA"/>
</dbReference>
<dbReference type="RefSeq" id="WP_052885052.1">
    <property type="nucleotide sequence ID" value="NC_008698.1"/>
</dbReference>
<dbReference type="SMR" id="A1RXG6"/>
<dbReference type="STRING" id="368408.Tpen_0488"/>
<dbReference type="EnsemblBacteria" id="ABL77896">
    <property type="protein sequence ID" value="ABL77896"/>
    <property type="gene ID" value="Tpen_0488"/>
</dbReference>
<dbReference type="GeneID" id="4601786"/>
<dbReference type="KEGG" id="tpe:Tpen_0488"/>
<dbReference type="eggNOG" id="arCOG04097">
    <property type="taxonomic scope" value="Archaea"/>
</dbReference>
<dbReference type="HOGENOM" id="CLU_058591_1_1_2"/>
<dbReference type="OrthoDB" id="9126at2157"/>
<dbReference type="Proteomes" id="UP000000641">
    <property type="component" value="Chromosome"/>
</dbReference>
<dbReference type="GO" id="GO:0022627">
    <property type="term" value="C:cytosolic small ribosomal subunit"/>
    <property type="evidence" value="ECO:0007669"/>
    <property type="project" value="TreeGrafter"/>
</dbReference>
<dbReference type="GO" id="GO:0019843">
    <property type="term" value="F:rRNA binding"/>
    <property type="evidence" value="ECO:0007669"/>
    <property type="project" value="UniProtKB-UniRule"/>
</dbReference>
<dbReference type="GO" id="GO:0003735">
    <property type="term" value="F:structural constituent of ribosome"/>
    <property type="evidence" value="ECO:0007669"/>
    <property type="project" value="InterPro"/>
</dbReference>
<dbReference type="GO" id="GO:0006412">
    <property type="term" value="P:translation"/>
    <property type="evidence" value="ECO:0007669"/>
    <property type="project" value="UniProtKB-UniRule"/>
</dbReference>
<dbReference type="CDD" id="cd02411">
    <property type="entry name" value="KH-II_30S_S3_arch"/>
    <property type="match status" value="1"/>
</dbReference>
<dbReference type="Gene3D" id="3.30.300.20">
    <property type="match status" value="1"/>
</dbReference>
<dbReference type="Gene3D" id="3.30.1140.32">
    <property type="entry name" value="Ribosomal protein S3, C-terminal domain"/>
    <property type="match status" value="1"/>
</dbReference>
<dbReference type="HAMAP" id="MF_01309_A">
    <property type="entry name" value="Ribosomal_uS3_A"/>
    <property type="match status" value="1"/>
</dbReference>
<dbReference type="InterPro" id="IPR004087">
    <property type="entry name" value="KH_dom"/>
</dbReference>
<dbReference type="InterPro" id="IPR015946">
    <property type="entry name" value="KH_dom-like_a/b"/>
</dbReference>
<dbReference type="InterPro" id="IPR004044">
    <property type="entry name" value="KH_dom_type_2"/>
</dbReference>
<dbReference type="InterPro" id="IPR009019">
    <property type="entry name" value="KH_sf_prok-type"/>
</dbReference>
<dbReference type="InterPro" id="IPR036419">
    <property type="entry name" value="Ribosomal_S3_C_sf"/>
</dbReference>
<dbReference type="InterPro" id="IPR027488">
    <property type="entry name" value="Ribosomal_uS3_arc"/>
</dbReference>
<dbReference type="InterPro" id="IPR001351">
    <property type="entry name" value="Ribosomal_uS3_C"/>
</dbReference>
<dbReference type="InterPro" id="IPR005703">
    <property type="entry name" value="Ribosomal_uS3_euk/arc"/>
</dbReference>
<dbReference type="NCBIfam" id="NF003219">
    <property type="entry name" value="PRK04191.1"/>
    <property type="match status" value="1"/>
</dbReference>
<dbReference type="NCBIfam" id="TIGR01008">
    <property type="entry name" value="uS3_euk_arch"/>
    <property type="match status" value="1"/>
</dbReference>
<dbReference type="PANTHER" id="PTHR11760">
    <property type="entry name" value="30S/40S RIBOSOMAL PROTEIN S3"/>
    <property type="match status" value="1"/>
</dbReference>
<dbReference type="PANTHER" id="PTHR11760:SF32">
    <property type="entry name" value="SMALL RIBOSOMAL SUBUNIT PROTEIN US3"/>
    <property type="match status" value="1"/>
</dbReference>
<dbReference type="Pfam" id="PF07650">
    <property type="entry name" value="KH_2"/>
    <property type="match status" value="1"/>
</dbReference>
<dbReference type="Pfam" id="PF00189">
    <property type="entry name" value="Ribosomal_S3_C"/>
    <property type="match status" value="1"/>
</dbReference>
<dbReference type="SMART" id="SM00322">
    <property type="entry name" value="KH"/>
    <property type="match status" value="1"/>
</dbReference>
<dbReference type="SUPFAM" id="SSF54814">
    <property type="entry name" value="Prokaryotic type KH domain (KH-domain type II)"/>
    <property type="match status" value="1"/>
</dbReference>
<dbReference type="SUPFAM" id="SSF54821">
    <property type="entry name" value="Ribosomal protein S3 C-terminal domain"/>
    <property type="match status" value="1"/>
</dbReference>
<dbReference type="PROSITE" id="PS50823">
    <property type="entry name" value="KH_TYPE_2"/>
    <property type="match status" value="1"/>
</dbReference>
<evidence type="ECO:0000255" key="1">
    <source>
        <dbReference type="HAMAP-Rule" id="MF_01309"/>
    </source>
</evidence>
<evidence type="ECO:0000305" key="2"/>
<proteinExistence type="inferred from homology"/>
<organism>
    <name type="scientific">Thermofilum pendens (strain DSM 2475 / Hrk 5)</name>
    <dbReference type="NCBI Taxonomy" id="368408"/>
    <lineage>
        <taxon>Archaea</taxon>
        <taxon>Thermoproteota</taxon>
        <taxon>Thermoprotei</taxon>
        <taxon>Thermofilales</taxon>
        <taxon>Thermofilaceae</taxon>
        <taxon>Thermofilum</taxon>
    </lineage>
</organism>
<accession>A1RXG6</accession>
<reference key="1">
    <citation type="journal article" date="2008" name="J. Bacteriol.">
        <title>Genome sequence of Thermofilum pendens reveals an exceptional loss of biosynthetic pathways without genome reduction.</title>
        <authorList>
            <person name="Anderson I."/>
            <person name="Rodriguez J."/>
            <person name="Susanti D."/>
            <person name="Porat I."/>
            <person name="Reich C."/>
            <person name="Ulrich L.E."/>
            <person name="Elkins J.G."/>
            <person name="Mavromatis K."/>
            <person name="Lykidis A."/>
            <person name="Kim E."/>
            <person name="Thompson L.S."/>
            <person name="Nolan M."/>
            <person name="Land M."/>
            <person name="Copeland A."/>
            <person name="Lapidus A."/>
            <person name="Lucas S."/>
            <person name="Detter C."/>
            <person name="Zhulin I.B."/>
            <person name="Olsen G.J."/>
            <person name="Whitman W."/>
            <person name="Mukhopadhyay B."/>
            <person name="Bristow J."/>
            <person name="Kyrpides N."/>
        </authorList>
    </citation>
    <scope>NUCLEOTIDE SEQUENCE [LARGE SCALE GENOMIC DNA]</scope>
    <source>
        <strain>DSM 2475 / Hrk 5</strain>
    </source>
</reference>
<comment type="function">
    <text evidence="1">Binds the lower part of the 30S subunit head.</text>
</comment>
<comment type="subunit">
    <text evidence="1">Part of the 30S ribosomal subunit.</text>
</comment>
<comment type="similarity">
    <text evidence="1">Belongs to the universal ribosomal protein uS3 family.</text>
</comment>
<comment type="sequence caution" evidence="2">
    <conflict type="erroneous initiation">
        <sequence resource="EMBL-CDS" id="ABL77896"/>
    </conflict>
    <text>Truncated N-terminus.</text>
</comment>
<name>RS3_THEPD</name>
<protein>
    <recommendedName>
        <fullName evidence="1">Small ribosomal subunit protein uS3</fullName>
    </recommendedName>
    <alternativeName>
        <fullName evidence="2">30S ribosomal protein S3</fullName>
    </alternativeName>
</protein>
<gene>
    <name evidence="1" type="primary">rps3</name>
    <name type="ordered locus">Tpen_0488</name>
</gene>
<sequence>MSTTARKVISQGLQYMMLNEYLQRQLVRANYVHAQFFKTPIGTKVIVYAGVPGLVIGRKGANIKAIAEVLEREFGIENPQIDVVEVPNQDLNAKIMAYRVARALVRGVRFRRAALVALNRIMAAGARGAEIVISGKLTSQRHRTEKFTRGYVPKSGEPGEELVDEAIVHVLLKLGMYGVKVRIMKPAKMPDTILIKGVTQVG</sequence>
<feature type="chain" id="PRO_0000293932" description="Small ribosomal subunit protein uS3">
    <location>
        <begin position="1"/>
        <end position="202"/>
    </location>
</feature>
<feature type="domain" description="KH type-2" evidence="1">
    <location>
        <begin position="18"/>
        <end position="87"/>
    </location>
</feature>
<keyword id="KW-1185">Reference proteome</keyword>
<keyword id="KW-0687">Ribonucleoprotein</keyword>
<keyword id="KW-0689">Ribosomal protein</keyword>
<keyword id="KW-0694">RNA-binding</keyword>
<keyword id="KW-0699">rRNA-binding</keyword>